<accession>Q03AT8</accession>
<name>SYL_LACP3</name>
<gene>
    <name evidence="1" type="primary">leuS</name>
    <name type="ordered locus">LSEI_0883</name>
</gene>
<keyword id="KW-0030">Aminoacyl-tRNA synthetase</keyword>
<keyword id="KW-0067">ATP-binding</keyword>
<keyword id="KW-0963">Cytoplasm</keyword>
<keyword id="KW-0436">Ligase</keyword>
<keyword id="KW-0547">Nucleotide-binding</keyword>
<keyword id="KW-0648">Protein biosynthesis</keyword>
<keyword id="KW-1185">Reference proteome</keyword>
<evidence type="ECO:0000255" key="1">
    <source>
        <dbReference type="HAMAP-Rule" id="MF_00049"/>
    </source>
</evidence>
<organism>
    <name type="scientific">Lacticaseibacillus paracasei (strain ATCC 334 / BCRC 17002 / CCUG 31169 / CIP 107868 / KCTC 3260 / NRRL B-441)</name>
    <name type="common">Lactobacillus paracasei</name>
    <dbReference type="NCBI Taxonomy" id="321967"/>
    <lineage>
        <taxon>Bacteria</taxon>
        <taxon>Bacillati</taxon>
        <taxon>Bacillota</taxon>
        <taxon>Bacilli</taxon>
        <taxon>Lactobacillales</taxon>
        <taxon>Lactobacillaceae</taxon>
        <taxon>Lacticaseibacillus</taxon>
    </lineage>
</organism>
<protein>
    <recommendedName>
        <fullName evidence="1">Leucine--tRNA ligase</fullName>
        <ecNumber evidence="1">6.1.1.4</ecNumber>
    </recommendedName>
    <alternativeName>
        <fullName evidence="1">Leucyl-tRNA synthetase</fullName>
        <shortName evidence="1">LeuRS</shortName>
    </alternativeName>
</protein>
<proteinExistence type="inferred from homology"/>
<feature type="chain" id="PRO_1000009358" description="Leucine--tRNA ligase">
    <location>
        <begin position="1"/>
        <end position="803"/>
    </location>
</feature>
<feature type="short sequence motif" description="'HIGH' region">
    <location>
        <begin position="40"/>
        <end position="51"/>
    </location>
</feature>
<feature type="short sequence motif" description="'KMSKS' region">
    <location>
        <begin position="575"/>
        <end position="579"/>
    </location>
</feature>
<feature type="binding site" evidence="1">
    <location>
        <position position="578"/>
    </location>
    <ligand>
        <name>ATP</name>
        <dbReference type="ChEBI" id="CHEBI:30616"/>
    </ligand>
</feature>
<comment type="catalytic activity">
    <reaction evidence="1">
        <text>tRNA(Leu) + L-leucine + ATP = L-leucyl-tRNA(Leu) + AMP + diphosphate</text>
        <dbReference type="Rhea" id="RHEA:11688"/>
        <dbReference type="Rhea" id="RHEA-COMP:9613"/>
        <dbReference type="Rhea" id="RHEA-COMP:9622"/>
        <dbReference type="ChEBI" id="CHEBI:30616"/>
        <dbReference type="ChEBI" id="CHEBI:33019"/>
        <dbReference type="ChEBI" id="CHEBI:57427"/>
        <dbReference type="ChEBI" id="CHEBI:78442"/>
        <dbReference type="ChEBI" id="CHEBI:78494"/>
        <dbReference type="ChEBI" id="CHEBI:456215"/>
        <dbReference type="EC" id="6.1.1.4"/>
    </reaction>
</comment>
<comment type="subcellular location">
    <subcellularLocation>
        <location evidence="1">Cytoplasm</location>
    </subcellularLocation>
</comment>
<comment type="similarity">
    <text evidence="1">Belongs to the class-I aminoacyl-tRNA synthetase family.</text>
</comment>
<sequence>MAYDHHEIDKKWQRYWAEHNEFNTTTDPKKPNYYALDMFPYPSGQGLHVGHPEGYTATDIVARMKRMQGFNVLHPMGWDAFGLPAEQYALNTGHNPKTFTKQNIETFKRQINSLGFSYDWNREINTTDPNYYKWTQWIFEQLYKHGLAYEAEVPVNWSPDLGTVVANEEVIDGKTERGGFPVVRKPMRQWMLKITAYAEKLLTDLDDLDWPESIKQMQRNWIGKSTGAQITFRVTDSHEPFDVFTTRPDTLFGATYVVMAPEHELVQKITTPAQQAVVDAYIDEAAHKSDLDRTALDKEKTGVWTGAYATNPVNGEKLPIWISDYVLASYGTGAIMSVPAHDDRDYAFAKKFGIEIKPVIEGGNVDEAAYTGDGVHINSGFLDGLNEHDAIDRMIKWLEDKGIGSAKINYKLRDWVFSRQRYWGEPIPVIHWEDGETTLVPEDELPLTLPEEADIKPSGTGESPLANLTDWVNVVDKNGRKGKRETNTMPQWAGSSWYFLRFVDPHNKEALADYDKLKAWMPVDLYIGGAEHAVLHLLYARFWNLFLYDIGAIPNKEPFQRLFNQGMILGDNHEKMSKSKGNVVNPDDVVDEYGADTLRLYEMFMGPLDAGIAWSTKGLAGARKFLDRVWSAFIDDEGKLRDRITTINDGRLDKVYNETVKKVTEDYDALHFNTAISQMMVFINSARKDDDLPLEYVEGFVKMLAPIAPHLMEEIWSRLGHDHSLTYAPWPSYDESKIKTDTYDMMIQVNGKLRGSITADVNESDDEIKQAALANDNVQKFTAGKDIKKIIVVPRKIVNIVAK</sequence>
<reference key="1">
    <citation type="journal article" date="2006" name="Proc. Natl. Acad. Sci. U.S.A.">
        <title>Comparative genomics of the lactic acid bacteria.</title>
        <authorList>
            <person name="Makarova K.S."/>
            <person name="Slesarev A."/>
            <person name="Wolf Y.I."/>
            <person name="Sorokin A."/>
            <person name="Mirkin B."/>
            <person name="Koonin E.V."/>
            <person name="Pavlov A."/>
            <person name="Pavlova N."/>
            <person name="Karamychev V."/>
            <person name="Polouchine N."/>
            <person name="Shakhova V."/>
            <person name="Grigoriev I."/>
            <person name="Lou Y."/>
            <person name="Rohksar D."/>
            <person name="Lucas S."/>
            <person name="Huang K."/>
            <person name="Goodstein D.M."/>
            <person name="Hawkins T."/>
            <person name="Plengvidhya V."/>
            <person name="Welker D."/>
            <person name="Hughes J."/>
            <person name="Goh Y."/>
            <person name="Benson A."/>
            <person name="Baldwin K."/>
            <person name="Lee J.-H."/>
            <person name="Diaz-Muniz I."/>
            <person name="Dosti B."/>
            <person name="Smeianov V."/>
            <person name="Wechter W."/>
            <person name="Barabote R."/>
            <person name="Lorca G."/>
            <person name="Altermann E."/>
            <person name="Barrangou R."/>
            <person name="Ganesan B."/>
            <person name="Xie Y."/>
            <person name="Rawsthorne H."/>
            <person name="Tamir D."/>
            <person name="Parker C."/>
            <person name="Breidt F."/>
            <person name="Broadbent J.R."/>
            <person name="Hutkins R."/>
            <person name="O'Sullivan D."/>
            <person name="Steele J."/>
            <person name="Unlu G."/>
            <person name="Saier M.H. Jr."/>
            <person name="Klaenhammer T."/>
            <person name="Richardson P."/>
            <person name="Kozyavkin S."/>
            <person name="Weimer B.C."/>
            <person name="Mills D.A."/>
        </authorList>
    </citation>
    <scope>NUCLEOTIDE SEQUENCE [LARGE SCALE GENOMIC DNA]</scope>
    <source>
        <strain>ATCC 334 / BCRC 17002 / CCUG 31169 / CIP 107868 / KCTC 3260 / NRRL B-441</strain>
    </source>
</reference>
<dbReference type="EC" id="6.1.1.4" evidence="1"/>
<dbReference type="EMBL" id="CP000423">
    <property type="protein sequence ID" value="ABJ69684.1"/>
    <property type="molecule type" value="Genomic_DNA"/>
</dbReference>
<dbReference type="RefSeq" id="WP_003578174.1">
    <property type="nucleotide sequence ID" value="NC_008526.1"/>
</dbReference>
<dbReference type="RefSeq" id="YP_806126.1">
    <property type="nucleotide sequence ID" value="NC_008526.1"/>
</dbReference>
<dbReference type="SMR" id="Q03AT8"/>
<dbReference type="STRING" id="321967.LSEI_0883"/>
<dbReference type="PaxDb" id="321967-LSEI_0883"/>
<dbReference type="KEGG" id="lca:LSEI_0883"/>
<dbReference type="PATRIC" id="fig|321967.11.peg.853"/>
<dbReference type="HOGENOM" id="CLU_004427_0_0_9"/>
<dbReference type="Proteomes" id="UP000001651">
    <property type="component" value="Chromosome"/>
</dbReference>
<dbReference type="GO" id="GO:0005829">
    <property type="term" value="C:cytosol"/>
    <property type="evidence" value="ECO:0007669"/>
    <property type="project" value="TreeGrafter"/>
</dbReference>
<dbReference type="GO" id="GO:0002161">
    <property type="term" value="F:aminoacyl-tRNA deacylase activity"/>
    <property type="evidence" value="ECO:0007669"/>
    <property type="project" value="InterPro"/>
</dbReference>
<dbReference type="GO" id="GO:0005524">
    <property type="term" value="F:ATP binding"/>
    <property type="evidence" value="ECO:0007669"/>
    <property type="project" value="UniProtKB-UniRule"/>
</dbReference>
<dbReference type="GO" id="GO:0004823">
    <property type="term" value="F:leucine-tRNA ligase activity"/>
    <property type="evidence" value="ECO:0007669"/>
    <property type="project" value="UniProtKB-UniRule"/>
</dbReference>
<dbReference type="GO" id="GO:0006429">
    <property type="term" value="P:leucyl-tRNA aminoacylation"/>
    <property type="evidence" value="ECO:0007669"/>
    <property type="project" value="UniProtKB-UniRule"/>
</dbReference>
<dbReference type="CDD" id="cd07958">
    <property type="entry name" value="Anticodon_Ia_Leu_BEm"/>
    <property type="match status" value="1"/>
</dbReference>
<dbReference type="CDD" id="cd00812">
    <property type="entry name" value="LeuRS_core"/>
    <property type="match status" value="1"/>
</dbReference>
<dbReference type="FunFam" id="3.10.20.590:FF:000001">
    <property type="entry name" value="Leucine--tRNA ligase"/>
    <property type="match status" value="1"/>
</dbReference>
<dbReference type="FunFam" id="3.40.50.620:FF:000056">
    <property type="entry name" value="Leucine--tRNA ligase"/>
    <property type="match status" value="1"/>
</dbReference>
<dbReference type="FunFam" id="3.40.50.620:FF:000077">
    <property type="entry name" value="Leucine--tRNA ligase"/>
    <property type="match status" value="1"/>
</dbReference>
<dbReference type="FunFam" id="1.10.730.10:FF:000011">
    <property type="entry name" value="Leucine--tRNA ligase chloroplastic/mitochondrial"/>
    <property type="match status" value="1"/>
</dbReference>
<dbReference type="Gene3D" id="3.10.20.590">
    <property type="match status" value="1"/>
</dbReference>
<dbReference type="Gene3D" id="3.40.50.620">
    <property type="entry name" value="HUPs"/>
    <property type="match status" value="2"/>
</dbReference>
<dbReference type="Gene3D" id="1.10.730.10">
    <property type="entry name" value="Isoleucyl-tRNA Synthetase, Domain 1"/>
    <property type="match status" value="1"/>
</dbReference>
<dbReference type="HAMAP" id="MF_00049_B">
    <property type="entry name" value="Leu_tRNA_synth_B"/>
    <property type="match status" value="1"/>
</dbReference>
<dbReference type="InterPro" id="IPR001412">
    <property type="entry name" value="aa-tRNA-synth_I_CS"/>
</dbReference>
<dbReference type="InterPro" id="IPR002300">
    <property type="entry name" value="aa-tRNA-synth_Ia"/>
</dbReference>
<dbReference type="InterPro" id="IPR002302">
    <property type="entry name" value="Leu-tRNA-ligase"/>
</dbReference>
<dbReference type="InterPro" id="IPR025709">
    <property type="entry name" value="Leu_tRNA-synth_edit"/>
</dbReference>
<dbReference type="InterPro" id="IPR013155">
    <property type="entry name" value="M/V/L/I-tRNA-synth_anticd-bd"/>
</dbReference>
<dbReference type="InterPro" id="IPR015413">
    <property type="entry name" value="Methionyl/Leucyl_tRNA_Synth"/>
</dbReference>
<dbReference type="InterPro" id="IPR014729">
    <property type="entry name" value="Rossmann-like_a/b/a_fold"/>
</dbReference>
<dbReference type="InterPro" id="IPR009080">
    <property type="entry name" value="tRNAsynth_Ia_anticodon-bd"/>
</dbReference>
<dbReference type="InterPro" id="IPR009008">
    <property type="entry name" value="Val/Leu/Ile-tRNA-synth_edit"/>
</dbReference>
<dbReference type="NCBIfam" id="TIGR00396">
    <property type="entry name" value="leuS_bact"/>
    <property type="match status" value="1"/>
</dbReference>
<dbReference type="PANTHER" id="PTHR43740:SF2">
    <property type="entry name" value="LEUCINE--TRNA LIGASE, MITOCHONDRIAL"/>
    <property type="match status" value="1"/>
</dbReference>
<dbReference type="PANTHER" id="PTHR43740">
    <property type="entry name" value="LEUCYL-TRNA SYNTHETASE"/>
    <property type="match status" value="1"/>
</dbReference>
<dbReference type="Pfam" id="PF08264">
    <property type="entry name" value="Anticodon_1"/>
    <property type="match status" value="1"/>
</dbReference>
<dbReference type="Pfam" id="PF00133">
    <property type="entry name" value="tRNA-synt_1"/>
    <property type="match status" value="1"/>
</dbReference>
<dbReference type="Pfam" id="PF13603">
    <property type="entry name" value="tRNA-synt_1_2"/>
    <property type="match status" value="1"/>
</dbReference>
<dbReference type="Pfam" id="PF09334">
    <property type="entry name" value="tRNA-synt_1g"/>
    <property type="match status" value="1"/>
</dbReference>
<dbReference type="PRINTS" id="PR00985">
    <property type="entry name" value="TRNASYNTHLEU"/>
</dbReference>
<dbReference type="SUPFAM" id="SSF47323">
    <property type="entry name" value="Anticodon-binding domain of a subclass of class I aminoacyl-tRNA synthetases"/>
    <property type="match status" value="1"/>
</dbReference>
<dbReference type="SUPFAM" id="SSF52374">
    <property type="entry name" value="Nucleotidylyl transferase"/>
    <property type="match status" value="1"/>
</dbReference>
<dbReference type="SUPFAM" id="SSF50677">
    <property type="entry name" value="ValRS/IleRS/LeuRS editing domain"/>
    <property type="match status" value="1"/>
</dbReference>
<dbReference type="PROSITE" id="PS00178">
    <property type="entry name" value="AA_TRNA_LIGASE_I"/>
    <property type="match status" value="1"/>
</dbReference>